<dbReference type="EC" id="2.3.2.27" evidence="2"/>
<dbReference type="EMBL" id="U50709">
    <property type="protein sequence ID" value="AAC48663.1"/>
    <property type="molecule type" value="Genomic_DNA"/>
</dbReference>
<dbReference type="RefSeq" id="NP_001013434.1">
    <property type="nucleotide sequence ID" value="NM_001013416.1"/>
</dbReference>
<dbReference type="SMR" id="Q95153"/>
<dbReference type="FunCoup" id="Q95153">
    <property type="interactions" value="448"/>
</dbReference>
<dbReference type="STRING" id="9615.ENSCAFP00000048759"/>
<dbReference type="PaxDb" id="9612-ENSCAFP00000021534"/>
<dbReference type="GeneID" id="403437"/>
<dbReference type="KEGG" id="cfa:403437"/>
<dbReference type="CTD" id="672"/>
<dbReference type="eggNOG" id="KOG4362">
    <property type="taxonomic scope" value="Eukaryota"/>
</dbReference>
<dbReference type="InParanoid" id="Q95153"/>
<dbReference type="OrthoDB" id="6105938at2759"/>
<dbReference type="UniPathway" id="UPA00143"/>
<dbReference type="Proteomes" id="UP000002254">
    <property type="component" value="Unplaced"/>
</dbReference>
<dbReference type="Proteomes" id="UP000694429">
    <property type="component" value="Unplaced"/>
</dbReference>
<dbReference type="Proteomes" id="UP000694542">
    <property type="component" value="Unplaced"/>
</dbReference>
<dbReference type="Proteomes" id="UP000805418">
    <property type="component" value="Unplaced"/>
</dbReference>
<dbReference type="GO" id="GO:0070531">
    <property type="term" value="C:BRCA1-A complex"/>
    <property type="evidence" value="ECO:0000318"/>
    <property type="project" value="GO_Central"/>
</dbReference>
<dbReference type="GO" id="GO:0031436">
    <property type="term" value="C:BRCA1-BARD1 complex"/>
    <property type="evidence" value="ECO:0000250"/>
    <property type="project" value="UniProtKB"/>
</dbReference>
<dbReference type="GO" id="GO:0005694">
    <property type="term" value="C:chromosome"/>
    <property type="evidence" value="ECO:0000250"/>
    <property type="project" value="UniProtKB"/>
</dbReference>
<dbReference type="GO" id="GO:0005737">
    <property type="term" value="C:cytoplasm"/>
    <property type="evidence" value="ECO:0000250"/>
    <property type="project" value="UniProtKB"/>
</dbReference>
<dbReference type="GO" id="GO:0005634">
    <property type="term" value="C:nucleus"/>
    <property type="evidence" value="ECO:0000250"/>
    <property type="project" value="UniProtKB"/>
</dbReference>
<dbReference type="GO" id="GO:0003677">
    <property type="term" value="F:DNA binding"/>
    <property type="evidence" value="ECO:0007669"/>
    <property type="project" value="UniProtKB-KW"/>
</dbReference>
<dbReference type="GO" id="GO:0070063">
    <property type="term" value="F:RNA polymerase binding"/>
    <property type="evidence" value="ECO:0000250"/>
    <property type="project" value="UniProtKB"/>
</dbReference>
<dbReference type="GO" id="GO:0003713">
    <property type="term" value="F:transcription coactivator activity"/>
    <property type="evidence" value="ECO:0000250"/>
    <property type="project" value="UniProtKB"/>
</dbReference>
<dbReference type="GO" id="GO:0004842">
    <property type="term" value="F:ubiquitin-protein transferase activity"/>
    <property type="evidence" value="ECO:0000250"/>
    <property type="project" value="UniProtKB"/>
</dbReference>
<dbReference type="GO" id="GO:0008270">
    <property type="term" value="F:zinc ion binding"/>
    <property type="evidence" value="ECO:0007669"/>
    <property type="project" value="UniProtKB-KW"/>
</dbReference>
<dbReference type="GO" id="GO:0043009">
    <property type="term" value="P:chordate embryonic development"/>
    <property type="evidence" value="ECO:0000318"/>
    <property type="project" value="GO_Central"/>
</dbReference>
<dbReference type="GO" id="GO:0000724">
    <property type="term" value="P:double-strand break repair via homologous recombination"/>
    <property type="evidence" value="ECO:0000318"/>
    <property type="project" value="GO_Central"/>
</dbReference>
<dbReference type="GO" id="GO:0006633">
    <property type="term" value="P:fatty acid biosynthetic process"/>
    <property type="evidence" value="ECO:0007669"/>
    <property type="project" value="UniProtKB-KW"/>
</dbReference>
<dbReference type="GO" id="GO:0007095">
    <property type="term" value="P:mitotic G2 DNA damage checkpoint signaling"/>
    <property type="evidence" value="ECO:0000318"/>
    <property type="project" value="GO_Central"/>
</dbReference>
<dbReference type="GO" id="GO:0045717">
    <property type="term" value="P:negative regulation of fatty acid biosynthetic process"/>
    <property type="evidence" value="ECO:0000250"/>
    <property type="project" value="UniProtKB"/>
</dbReference>
<dbReference type="GO" id="GO:0045893">
    <property type="term" value="P:positive regulation of DNA-templated transcription"/>
    <property type="evidence" value="ECO:0000250"/>
    <property type="project" value="UniProtKB"/>
</dbReference>
<dbReference type="GO" id="GO:0045944">
    <property type="term" value="P:positive regulation of transcription by RNA polymerase II"/>
    <property type="evidence" value="ECO:0000318"/>
    <property type="project" value="GO_Central"/>
</dbReference>
<dbReference type="GO" id="GO:0051865">
    <property type="term" value="P:protein autoubiquitination"/>
    <property type="evidence" value="ECO:0000250"/>
    <property type="project" value="UniProtKB"/>
</dbReference>
<dbReference type="GO" id="GO:0085020">
    <property type="term" value="P:protein K6-linked ubiquitination"/>
    <property type="evidence" value="ECO:0000250"/>
    <property type="project" value="UniProtKB"/>
</dbReference>
<dbReference type="GO" id="GO:0006357">
    <property type="term" value="P:regulation of transcription by RNA polymerase II"/>
    <property type="evidence" value="ECO:0000250"/>
    <property type="project" value="UniProtKB"/>
</dbReference>
<dbReference type="GO" id="GO:0007549">
    <property type="term" value="P:sex-chromosome dosage compensation"/>
    <property type="evidence" value="ECO:0000318"/>
    <property type="project" value="GO_Central"/>
</dbReference>
<dbReference type="CDD" id="cd17735">
    <property type="entry name" value="BRCT_BRCA1_rpt1"/>
    <property type="match status" value="1"/>
</dbReference>
<dbReference type="CDD" id="cd17721">
    <property type="entry name" value="BRCT_BRCA1_rpt2"/>
    <property type="match status" value="1"/>
</dbReference>
<dbReference type="CDD" id="cd16498">
    <property type="entry name" value="RING-HC_BRCA1"/>
    <property type="match status" value="1"/>
</dbReference>
<dbReference type="FunFam" id="3.30.40.10:FF:000213">
    <property type="entry name" value="Breast cancer type 1 susceptibility protein homolog"/>
    <property type="match status" value="1"/>
</dbReference>
<dbReference type="FunFam" id="3.40.50.10190:FF:000006">
    <property type="entry name" value="Breast cancer type 1 susceptibility protein homolog"/>
    <property type="match status" value="1"/>
</dbReference>
<dbReference type="FunFam" id="3.40.50.10190:FF:000025">
    <property type="entry name" value="Breast cancer type 1 susceptibility protein homolog"/>
    <property type="match status" value="1"/>
</dbReference>
<dbReference type="Gene3D" id="3.40.50.10190">
    <property type="entry name" value="BRCT domain"/>
    <property type="match status" value="2"/>
</dbReference>
<dbReference type="Gene3D" id="3.30.40.10">
    <property type="entry name" value="Zinc/RING finger domain, C3HC4 (zinc finger)"/>
    <property type="match status" value="1"/>
</dbReference>
<dbReference type="InterPro" id="IPR011364">
    <property type="entry name" value="BRCA1"/>
</dbReference>
<dbReference type="InterPro" id="IPR031099">
    <property type="entry name" value="BRCA1-associated"/>
</dbReference>
<dbReference type="InterPro" id="IPR025994">
    <property type="entry name" value="BRCA1_serine_dom"/>
</dbReference>
<dbReference type="InterPro" id="IPR001357">
    <property type="entry name" value="BRCT_dom"/>
</dbReference>
<dbReference type="InterPro" id="IPR036420">
    <property type="entry name" value="BRCT_dom_sf"/>
</dbReference>
<dbReference type="InterPro" id="IPR018957">
    <property type="entry name" value="Znf_C3HC4_RING-type"/>
</dbReference>
<dbReference type="InterPro" id="IPR001841">
    <property type="entry name" value="Znf_RING"/>
</dbReference>
<dbReference type="InterPro" id="IPR013083">
    <property type="entry name" value="Znf_RING/FYVE/PHD"/>
</dbReference>
<dbReference type="InterPro" id="IPR017907">
    <property type="entry name" value="Znf_RING_CS"/>
</dbReference>
<dbReference type="PANTHER" id="PTHR13763:SF0">
    <property type="entry name" value="BREAST CANCER TYPE 1 SUSCEPTIBILITY PROTEIN"/>
    <property type="match status" value="1"/>
</dbReference>
<dbReference type="PANTHER" id="PTHR13763">
    <property type="entry name" value="BREAST CANCER TYPE 1 SUSCEPTIBILITY PROTEIN BRCA1"/>
    <property type="match status" value="1"/>
</dbReference>
<dbReference type="Pfam" id="PF00533">
    <property type="entry name" value="BRCT"/>
    <property type="match status" value="2"/>
</dbReference>
<dbReference type="Pfam" id="PF12820">
    <property type="entry name" value="BRCT_assoc"/>
    <property type="match status" value="1"/>
</dbReference>
<dbReference type="Pfam" id="PF00097">
    <property type="entry name" value="zf-C3HC4"/>
    <property type="match status" value="1"/>
</dbReference>
<dbReference type="PIRSF" id="PIRSF001734">
    <property type="entry name" value="BRCA1"/>
    <property type="match status" value="1"/>
</dbReference>
<dbReference type="PRINTS" id="PR00493">
    <property type="entry name" value="BRSTCANCERI"/>
</dbReference>
<dbReference type="SMART" id="SM00292">
    <property type="entry name" value="BRCT"/>
    <property type="match status" value="2"/>
</dbReference>
<dbReference type="SMART" id="SM00184">
    <property type="entry name" value="RING"/>
    <property type="match status" value="1"/>
</dbReference>
<dbReference type="SUPFAM" id="SSF52113">
    <property type="entry name" value="BRCT domain"/>
    <property type="match status" value="2"/>
</dbReference>
<dbReference type="SUPFAM" id="SSF57850">
    <property type="entry name" value="RING/U-box"/>
    <property type="match status" value="1"/>
</dbReference>
<dbReference type="PROSITE" id="PS50172">
    <property type="entry name" value="BRCT"/>
    <property type="match status" value="2"/>
</dbReference>
<dbReference type="PROSITE" id="PS00518">
    <property type="entry name" value="ZF_RING_1"/>
    <property type="match status" value="1"/>
</dbReference>
<dbReference type="PROSITE" id="PS50089">
    <property type="entry name" value="ZF_RING_2"/>
    <property type="match status" value="1"/>
</dbReference>
<name>BRCA1_CANLF</name>
<reference key="1">
    <citation type="journal article" date="1996" name="Hum. Mol. Genet.">
        <title>Human, canine and murine BRCA1 genes: sequence comparison among species.</title>
        <authorList>
            <person name="Szabo C.I."/>
            <person name="Wagner L.A."/>
            <person name="Francisco L.V."/>
            <person name="Roach J.C."/>
            <person name="Argonza R."/>
            <person name="King M.-C."/>
            <person name="Ostrander E.A."/>
        </authorList>
    </citation>
    <scope>NUCLEOTIDE SEQUENCE [GENOMIC DNA]</scope>
</reference>
<evidence type="ECO:0000250" key="1"/>
<evidence type="ECO:0000250" key="2">
    <source>
        <dbReference type="UniProtKB" id="P38398"/>
    </source>
</evidence>
<evidence type="ECO:0000250" key="3">
    <source>
        <dbReference type="UniProtKB" id="P48754"/>
    </source>
</evidence>
<evidence type="ECO:0000255" key="4">
    <source>
        <dbReference type="PROSITE-ProRule" id="PRU00033"/>
    </source>
</evidence>
<evidence type="ECO:0000255" key="5">
    <source>
        <dbReference type="PROSITE-ProRule" id="PRU00175"/>
    </source>
</evidence>
<evidence type="ECO:0000256" key="6">
    <source>
        <dbReference type="SAM" id="MobiDB-lite"/>
    </source>
</evidence>
<evidence type="ECO:0000305" key="7"/>
<accession>Q95153</accession>
<organism>
    <name type="scientific">Canis lupus familiaris</name>
    <name type="common">Dog</name>
    <name type="synonym">Canis familiaris</name>
    <dbReference type="NCBI Taxonomy" id="9615"/>
    <lineage>
        <taxon>Eukaryota</taxon>
        <taxon>Metazoa</taxon>
        <taxon>Chordata</taxon>
        <taxon>Craniata</taxon>
        <taxon>Vertebrata</taxon>
        <taxon>Euteleostomi</taxon>
        <taxon>Mammalia</taxon>
        <taxon>Eutheria</taxon>
        <taxon>Laurasiatheria</taxon>
        <taxon>Carnivora</taxon>
        <taxon>Caniformia</taxon>
        <taxon>Canidae</taxon>
        <taxon>Canis</taxon>
    </lineage>
</organism>
<comment type="function">
    <text evidence="2">E3 ubiquitin-protein ligase that specifically mediates the formation of 'Lys-6'-linked polyubiquitin chains and plays a central role in DNA repair by facilitating cellular responses to DNA damage. It is unclear whether it also mediates the formation of other types of polyubiquitin chains. The BRCA1-BARD1 heterodimer coordinates a diverse range of cellular pathways such as DNA damage repair, ubiquitination and transcriptional regulation to maintain genomic stability. Regulates centrosomal microtubule nucleation. Required for appropriate cell cycle arrests after ionizing irradiation in both the S-phase and the G2 phase of the cell cycle. Required for FANCD2 targeting to sites of DNA damage. Inhibits lipid synthesis by binding to inactive phosphorylated ACACA and preventing its dephosphorylation. Contributes to homologous recombination repair (HRR) via its direct interaction with PALB2, fine-tunes recombinational repair partly through its modulatory role in the PALB2-dependent loading of BRCA2-RAD51 repair machinery at DNA breaks. Component of the BRCA1-RBBP8 complex which regulates CHEK1 activation and controls cell cycle G2/M checkpoints on DNA damage via BRCA1-mediated ubiquitination of RBBP8. Acts as a transcriptional activator.</text>
</comment>
<comment type="catalytic activity">
    <reaction evidence="2">
        <text>S-ubiquitinyl-[E2 ubiquitin-conjugating enzyme]-L-cysteine + [acceptor protein]-L-lysine = [E2 ubiquitin-conjugating enzyme]-L-cysteine + N(6)-ubiquitinyl-[acceptor protein]-L-lysine.</text>
        <dbReference type="EC" id="2.3.2.27"/>
    </reaction>
</comment>
<comment type="pathway">
    <text>Protein modification; protein ubiquitination.</text>
</comment>
<comment type="subunit">
    <text evidence="2">Heterodimer with BARD1. Part of the BRCA1-associated genome surveillance complex (BASC), which contains BRCA1, MSH2, MSH6, MLH1, ATM, BLM, PMS2 and the MRE11-RAD50-NBN protein (MRN) complex. This association could be a dynamic process changing throughout the cell cycle and within subnuclear domains. Component of the BRCA1-A complex, at least composed of BRCA1, BARD1, UIMC1/RAP80, ABRAXAS1, BRCC3/BRCC36, BABAM2 and BABAM1/NBA1. Interacts (via the BRCT domains) with ABRAXAS1 (phosphorylated form); this is important for recruitment to sites of DNA damage. Can form a heterotetramer with two molecules of ABRAXAS1 (phosphorylated form). Component of the BRCA1-RBBP8 complex. Interacts (via the BRCT domains) with RBBP8 ('Ser-327' phosphorylated form); the interaction ubiquitinates RBBP8, regulates CHEK1 activation, and involves RBBP8 in BRCA1-dependent G2/M checkpoint control on DNA damage. Associates with RNA polymerase II holoenzyme. Interacts with SMC1A, NELFB, DCLRE1C, CLSPN. CHEK1, CHEK2, BAP1, BRCC3, UBXN1 and PCLAF. Interacts (via BRCT domains) with BRIP1 (phosphorylated form). Interacts with FANCD2 (ubiquitinated form). Interacts with H2AX (phosphorylated on 'Ser-140'). Interacts (via the BRCT domains) with ACACA (phosphorylated form); the interaction prevents dephosphorylation of ACACA. Part of a BRCA complex containing BRCA1, BRCA2 and PALB2. Interacts directly with PALB2; the interaction is essential for its function in HRR. Interacts directly with BRCA2; the interaction occurs only in the presence of PALB2 which serves as the bridging protein. Interacts (via the BRCT domains) with LMO4; the interaction represses the transcriptional activity of BRCA1. Interacts (via the BRCT domains) with CCAR2 (via N-terminus); the interaction represses the transcriptional activator activity of BRCA1 (By similarity). Interacts with EXD2 (By similarity). Interacts (via C-terminus) with DHX9; this interaction is direct and links BRCA1 to the RNA polymerase II holoenzyme (By similarity). Interacts with DNA helicase ZGRF1; the interaction is increased following DNA damage induction (By similarity).</text>
</comment>
<comment type="subcellular location">
    <subcellularLocation>
        <location evidence="2">Nucleus</location>
    </subcellularLocation>
    <subcellularLocation>
        <location evidence="3">Chromosome</location>
    </subcellularLocation>
    <subcellularLocation>
        <location evidence="2">Cytoplasm</location>
    </subcellularLocation>
    <text evidence="2">Localizes at sites of DNA damage at double-strand breaks (DSBs); recruitment to DNA damage sites is mediated by the BRCA1-A complex. Translocated to the cytoplasm during UV-induced apoptosis.</text>
</comment>
<comment type="domain">
    <text evidence="1">The BRCT domains recognize and bind phosphorylated pSXXF motif on proteins. The interaction with the phosphorylated pSXXF motif of ABRAXAS1, recruits BRCA1 at DNA damage sites (By similarity).</text>
</comment>
<comment type="domain">
    <text evidence="1">The RING-type zinc finger domain interacts with BAP1.</text>
</comment>
<comment type="PTM">
    <text evidence="1">Phosphorylated in response to IR, UV, and various stimuli that cause checkpoint activation, probably by ATM or ATR. Phosphorylation at Ser-987 by CHEK2 regulates mitotic spindle assembly. Phosphorylation by AURKA regulates centrosomal microtubule nucleation.</text>
</comment>
<comment type="PTM">
    <text evidence="1">Autoubiquitinated, undergoes 'Lys-6'-linked polyubiquitination. 'Lys-6'-linked polyubiquitination does not promote degradation (By similarity).</text>
</comment>
<feature type="chain" id="PRO_0000055828" description="Breast cancer type 1 susceptibility protein homolog">
    <location>
        <begin position="1"/>
        <end position="1878"/>
    </location>
</feature>
<feature type="domain" description="BRCT 1" evidence="4">
    <location>
        <begin position="1652"/>
        <end position="1739"/>
    </location>
</feature>
<feature type="domain" description="BRCT 2" evidence="4">
    <location>
        <begin position="1764"/>
        <end position="1863"/>
    </location>
</feature>
<feature type="zinc finger region" description="RING-type" evidence="5">
    <location>
        <begin position="24"/>
        <end position="65"/>
    </location>
</feature>
<feature type="region of interest" description="Disordered" evidence="6">
    <location>
        <begin position="303"/>
        <end position="329"/>
    </location>
</feature>
<feature type="region of interest" description="Disordered" evidence="6">
    <location>
        <begin position="349"/>
        <end position="368"/>
    </location>
</feature>
<feature type="region of interest" description="Disordered" evidence="6">
    <location>
        <begin position="548"/>
        <end position="614"/>
    </location>
</feature>
<feature type="region of interest" description="Disordered" evidence="6">
    <location>
        <begin position="1134"/>
        <end position="1154"/>
    </location>
</feature>
<feature type="region of interest" description="Disordered" evidence="6">
    <location>
        <begin position="1183"/>
        <end position="1221"/>
    </location>
</feature>
<feature type="region of interest" description="Disordered" evidence="6">
    <location>
        <begin position="1315"/>
        <end position="1401"/>
    </location>
</feature>
<feature type="region of interest" description="Interaction with PALB2" evidence="1">
    <location>
        <begin position="1401"/>
        <end position="1428"/>
    </location>
</feature>
<feature type="region of interest" description="Disordered" evidence="6">
    <location>
        <begin position="1419"/>
        <end position="1504"/>
    </location>
</feature>
<feature type="region of interest" description="Disordered" evidence="6">
    <location>
        <begin position="1570"/>
        <end position="1590"/>
    </location>
</feature>
<feature type="region of interest" description="Disordered" evidence="6">
    <location>
        <begin position="1743"/>
        <end position="1764"/>
    </location>
</feature>
<feature type="compositionally biased region" description="Polar residues" evidence="6">
    <location>
        <begin position="303"/>
        <end position="318"/>
    </location>
</feature>
<feature type="compositionally biased region" description="Basic and acidic residues" evidence="6">
    <location>
        <begin position="349"/>
        <end position="365"/>
    </location>
</feature>
<feature type="compositionally biased region" description="Basic and acidic residues" evidence="6">
    <location>
        <begin position="559"/>
        <end position="582"/>
    </location>
</feature>
<feature type="compositionally biased region" description="Low complexity" evidence="6">
    <location>
        <begin position="590"/>
        <end position="601"/>
    </location>
</feature>
<feature type="compositionally biased region" description="Basic residues" evidence="6">
    <location>
        <begin position="603"/>
        <end position="614"/>
    </location>
</feature>
<feature type="compositionally biased region" description="Polar residues" evidence="6">
    <location>
        <begin position="1138"/>
        <end position="1148"/>
    </location>
</feature>
<feature type="compositionally biased region" description="Polar residues" evidence="6">
    <location>
        <begin position="1183"/>
        <end position="1194"/>
    </location>
</feature>
<feature type="compositionally biased region" description="Polar residues" evidence="6">
    <location>
        <begin position="1315"/>
        <end position="1325"/>
    </location>
</feature>
<feature type="compositionally biased region" description="Basic and acidic residues" evidence="6">
    <location>
        <begin position="1329"/>
        <end position="1343"/>
    </location>
</feature>
<feature type="compositionally biased region" description="Acidic residues" evidence="6">
    <location>
        <begin position="1344"/>
        <end position="1369"/>
    </location>
</feature>
<feature type="compositionally biased region" description="Polar residues" evidence="6">
    <location>
        <begin position="1377"/>
        <end position="1401"/>
    </location>
</feature>
<feature type="compositionally biased region" description="Polar residues" evidence="6">
    <location>
        <begin position="1465"/>
        <end position="1491"/>
    </location>
</feature>
<feature type="compositionally biased region" description="Basic and acidic residues" evidence="6">
    <location>
        <begin position="1754"/>
        <end position="1764"/>
    </location>
</feature>
<feature type="modified residue" description="N-acetylmethionine" evidence="2">
    <location>
        <position position="1"/>
    </location>
</feature>
<feature type="modified residue" description="Phosphoserine" evidence="2">
    <location>
        <position position="114"/>
    </location>
</feature>
<feature type="modified residue" description="Phosphoserine" evidence="2">
    <location>
        <position position="392"/>
    </location>
</feature>
<feature type="modified residue" description="Phosphoserine" evidence="2">
    <location>
        <position position="395"/>
    </location>
</feature>
<feature type="modified residue" description="Phosphoserine" evidence="2">
    <location>
        <position position="420"/>
    </location>
</feature>
<feature type="modified residue" description="Phosphoserine" evidence="2">
    <location>
        <position position="431"/>
    </location>
</feature>
<feature type="modified residue" description="Phosphoserine" evidence="2">
    <location>
        <position position="692"/>
    </location>
</feature>
<feature type="modified residue" description="Phosphoserine" evidence="3">
    <location>
        <position position="712"/>
    </location>
</feature>
<feature type="modified residue" description="Phosphoserine" evidence="2">
    <location>
        <position position="751"/>
    </location>
</feature>
<feature type="modified residue" description="Phosphoserine; by CHEK2" evidence="2">
    <location>
        <position position="987"/>
    </location>
</feature>
<feature type="modified residue" description="Phosphoserine" evidence="2">
    <location>
        <position position="1008"/>
    </location>
</feature>
<feature type="modified residue" description="Phosphoserine" evidence="2">
    <location>
        <position position="1144"/>
    </location>
</feature>
<feature type="modified residue" description="Phosphoserine" evidence="2">
    <location>
        <position position="1190"/>
    </location>
</feature>
<feature type="modified residue" description="Phosphoserine" evidence="2">
    <location>
        <position position="1192"/>
    </location>
</feature>
<feature type="modified residue" description="Phosphoserine" evidence="2">
    <location>
        <position position="1212"/>
    </location>
</feature>
<feature type="modified residue" description="Phosphoserine" evidence="2">
    <location>
        <position position="1218"/>
    </location>
</feature>
<feature type="modified residue" description="Phosphoserine" evidence="2">
    <location>
        <position position="1219"/>
    </location>
</feature>
<feature type="modified residue" description="Phosphoserine" evidence="2">
    <location>
        <position position="1281"/>
    </location>
</feature>
<feature type="modified residue" description="Phosphoserine" evidence="2">
    <location>
        <position position="1331"/>
    </location>
</feature>
<feature type="modified residue" description="Phosphoserine" evidence="2">
    <location>
        <position position="1344"/>
    </location>
</feature>
<feature type="modified residue" description="Phosphoserine" evidence="2">
    <location>
        <position position="1391"/>
    </location>
</feature>
<feature type="modified residue" description="Phosphothreonine" evidence="2">
    <location>
        <position position="1398"/>
    </location>
</feature>
<feature type="modified residue" description="Phosphoserine" evidence="2">
    <location>
        <position position="1427"/>
    </location>
</feature>
<feature type="modified residue" description="Phosphoserine" evidence="2">
    <location>
        <position position="1460"/>
    </location>
</feature>
<feature type="modified residue" description="Phosphoserine" evidence="2">
    <location>
        <position position="1527"/>
    </location>
</feature>
<feature type="modified residue" description="Phosphoserine" evidence="2">
    <location>
        <position position="1545"/>
    </location>
</feature>
<feature type="cross-link" description="Glycyl lysine isopeptide (Lys-Gly) (interchain with G-Cter in SUMO2)" evidence="2">
    <location>
        <position position="109"/>
    </location>
</feature>
<feature type="cross-link" description="Glycyl lysine isopeptide (Lys-Gly) (interchain with G-Cter in SUMO2)" evidence="2">
    <location>
        <position position="298"/>
    </location>
</feature>
<feature type="cross-link" description="Glycyl lysine isopeptide (Lys-Gly) (interchain with G-Cter in SUMO2)" evidence="2">
    <location>
        <position position="336"/>
    </location>
</feature>
<feature type="cross-link" description="Glycyl lysine isopeptide (Lys-Gly) (interchain with G-Cter in SUMO2)" evidence="2">
    <location>
        <position position="456"/>
    </location>
</feature>
<feature type="cross-link" description="Glycyl lysine isopeptide (Lys-Gly) (interchain with G-Cter in SUMO2)" evidence="2">
    <location>
        <position position="516"/>
    </location>
</feature>
<feature type="cross-link" description="Glycyl lysine isopeptide (Lys-Gly) (interchain with G-Cter in SUMO2)" evidence="2">
    <location>
        <position position="581"/>
    </location>
</feature>
<feature type="cross-link" description="Glycyl lysine isopeptide (Lys-Gly) (interchain with G-Cter in SUMO2)" evidence="2">
    <location>
        <position position="1079"/>
    </location>
</feature>
<keyword id="KW-0007">Acetylation</keyword>
<keyword id="KW-0010">Activator</keyword>
<keyword id="KW-0131">Cell cycle</keyword>
<keyword id="KW-0158">Chromosome</keyword>
<keyword id="KW-0963">Cytoplasm</keyword>
<keyword id="KW-0227">DNA damage</keyword>
<keyword id="KW-0233">DNA recombination</keyword>
<keyword id="KW-0234">DNA repair</keyword>
<keyword id="KW-0238">DNA-binding</keyword>
<keyword id="KW-0275">Fatty acid biosynthesis</keyword>
<keyword id="KW-0276">Fatty acid metabolism</keyword>
<keyword id="KW-1017">Isopeptide bond</keyword>
<keyword id="KW-0444">Lipid biosynthesis</keyword>
<keyword id="KW-0443">Lipid metabolism</keyword>
<keyword id="KW-0479">Metal-binding</keyword>
<keyword id="KW-0539">Nucleus</keyword>
<keyword id="KW-0597">Phosphoprotein</keyword>
<keyword id="KW-1185">Reference proteome</keyword>
<keyword id="KW-0677">Repeat</keyword>
<keyword id="KW-0804">Transcription</keyword>
<keyword id="KW-0805">Transcription regulation</keyword>
<keyword id="KW-0808">Transferase</keyword>
<keyword id="KW-0043">Tumor suppressor</keyword>
<keyword id="KW-0832">Ubl conjugation</keyword>
<keyword id="KW-0833">Ubl conjugation pathway</keyword>
<keyword id="KW-0862">Zinc</keyword>
<keyword id="KW-0863">Zinc-finger</keyword>
<protein>
    <recommendedName>
        <fullName>Breast cancer type 1 susceptibility protein homolog</fullName>
        <ecNumber evidence="2">2.3.2.27</ecNumber>
    </recommendedName>
    <alternativeName>
        <fullName evidence="7">RING-type E3 ubiquitin transferase BRCA1</fullName>
    </alternativeName>
</protein>
<sequence length="1878" mass="208447">MDLSADRVEEVQNVLNAMQKILECPICLELIKEPVSTKCDHIFCKFCMLKLLNQRKGPSQCPLCKNDITKRSLQESTRFSQLVEELLKIIHAFELDTGLQFADSYNFSKKENNSPEHLKEEVSIIQSMGYRNRAKRLRQSEPENPTLETSLSVQLSNLGIVRSLRTKQQIQPQNKSVYIELGSDSSEDTVNKASSCSVGDDELEITSQGARAEASLNPAKKAACEFSGDITNIEHHQSSNKDLTTTEKHATKKHPEKYQGISVSNLHVEPCGTNTHASSLQHENSSLLLTKHRMNVEKAEICNNSKQPGLARSQQSRWAESKETCNDRQIPSTEKKVVVNADLLCGRKELNKQKPPHSDSPRDSQDVPWITLNSSIRKVNEWFSRSDEILTSDDSHDRGSELNTEVGGAVEVPNEVGEYSGSSEKIDLMASDPQDAFICESERVHTKPVGGNIEDKIFGKTYRRKASLPKVSHTTEVLTIGACAIEPQTMQTHPFMNKAEHKRRTTSSLHPEDFIKKVELGIVPKTPEKLIEGINQIKRDGHVINITNNGPENETEGDYVQKEKNANPTESLEKESAFRTKTEPMSSRISNMELELNSSSSKAPKKNRLRRKSSARHTCALEFVVNRNLNPPDHSELQIESCSSSEEMKKQHLDQVPVRHNKTLQLMQDKEPAGRAKKSSKPGEQINKRLASHAFPELTLTNVSGFFANYSSSSKPQECINPGLRREEIEESRRMTQVSDSTRDPKELVLSGGRGLQTERSVESTSISLVLDTDYGTQDSISLLEADTLRKAKTVSNQQANLCATIENPKEPIHGCSKDTRNDTEGFVVPLTCKDNHTQETSIEMEESELDTQCLRNMFKVSKRQSFALFSYPRDPEEDCVTVCPRSGAFGKQGPKVTLECGQKEESQGKKESEIRHVQAVHTNAGFSAVSQKAKKPGDFAKCSIKGVSRLCLSSQFKGKETELLIANYHGISQNPYHIPPLSPIRSCVKTLCQENLSEEKFEQHSMSPERAVGNERVIQSTVSTISQNNIRECASKEVGSSSVNEVVSSTNEVGSSVNEVGSSGENIQAELGRNRGPKLNAMLRLGLMQPEVCKQSLSLSNCKHPEMKWQGQSEGAVLSVSADFSPCLISDNPEQPMGSSRSSQVCSETPDDLLNGDKIKGKVSFAESDIKEKSAVFSKSVQSGEFSRSPSPSDHTRLAQGYQRGTKKLESSEENMSSEEEELPCFQHLIFGKVTNMPSQSTSHNAVAAEGLSNKTEENLDSLKNSLSDISNQVPSAKASQEHHLSEEARCSGSLFSSQCSALEDLTVNTNTQDPFSMFDPTSKQVRHQSENLDVLNDKELVSDDDDEREPGLEEDSPQEEQSVDSDLGEVASGYESETSLSEDCSRLSSQSDILTTQQRDTMQDNLIKLQQEMAELEAVLEQHESQPSNSSPSLIADSCSPEDLLNPEQNASERVLTSEKSSDSPISQNPESLSTDKFQVFLDSSTSKNGEPGMIRSSPSQSRLLDTRWYVHSCPRSLQDTNCPSQKELTKVVSMEEQQPTESEARDLMEQSYLSRPDLEGAPYLESGISLFSDDPESDPSSHRASELAHVSSMPTSTSALKLPQFQVEESAKSTAAVHIASTAGYNKSEDSVGIEKPEVISSTRGVNKRISMVASGLTPKEFMLVHKFARKHHISLTNLISEETTHVIMKTDAEFVCERTLKYFLGIAGGKWVVSYFWVTQSIKERKILDEHDFEVRGDVVNGRNHQGPKRARESQDRESQDRKIFRGLEICCYGPFTNMPTDQLEWMVHLCGASVVKEPSLFTLSKGTHPVVVVQPDAWTEDSGFHAIGQMCEAPVVTREWVLDSVALYQCQELDTYLIPQIPRTAADSSQPCV</sequence>
<proteinExistence type="inferred from homology"/>
<gene>
    <name type="primary">BRCA1</name>
</gene>